<evidence type="ECO:0000250" key="1">
    <source>
        <dbReference type="UniProtKB" id="P21614"/>
    </source>
</evidence>
<evidence type="ECO:0000255" key="2">
    <source>
        <dbReference type="PROSITE-ProRule" id="PRU00769"/>
    </source>
</evidence>
<evidence type="ECO:0000269" key="3">
    <source>
    </source>
</evidence>
<evidence type="ECO:0000269" key="4">
    <source>
    </source>
</evidence>
<evidence type="ECO:0000269" key="5">
    <source>
    </source>
</evidence>
<evidence type="ECO:0000269" key="6">
    <source>
    </source>
</evidence>
<evidence type="ECO:0000269" key="7">
    <source>
    </source>
</evidence>
<evidence type="ECO:0000269" key="8">
    <source>
    </source>
</evidence>
<evidence type="ECO:0000269" key="9">
    <source>
    </source>
</evidence>
<evidence type="ECO:0000269" key="10">
    <source>
    </source>
</evidence>
<evidence type="ECO:0000269" key="11">
    <source>
    </source>
</evidence>
<evidence type="ECO:0000269" key="12">
    <source>
    </source>
</evidence>
<evidence type="ECO:0000269" key="13">
    <source>
    </source>
</evidence>
<evidence type="ECO:0000269" key="14">
    <source>
    </source>
</evidence>
<evidence type="ECO:0000269" key="15">
    <source ref="6"/>
</evidence>
<evidence type="ECO:0000269" key="16">
    <source ref="8"/>
</evidence>
<evidence type="ECO:0000303" key="17">
    <source>
    </source>
</evidence>
<evidence type="ECO:0000303" key="18">
    <source>
    </source>
</evidence>
<evidence type="ECO:0000305" key="19"/>
<evidence type="ECO:0000305" key="20">
    <source>
    </source>
</evidence>
<evidence type="ECO:0007829" key="21">
    <source>
        <dbReference type="PDB" id="1J78"/>
    </source>
</evidence>
<evidence type="ECO:0007829" key="22">
    <source>
        <dbReference type="PDB" id="1KW2"/>
    </source>
</evidence>
<evidence type="ECO:0007829" key="23">
    <source>
        <dbReference type="PDB" id="1KXP"/>
    </source>
</evidence>
<evidence type="ECO:0007829" key="24">
    <source>
        <dbReference type="PDB" id="1LOT"/>
    </source>
</evidence>
<proteinExistence type="evidence at protein level"/>
<gene>
    <name type="primary">GC</name>
</gene>
<organism>
    <name type="scientific">Homo sapiens</name>
    <name type="common">Human</name>
    <dbReference type="NCBI Taxonomy" id="9606"/>
    <lineage>
        <taxon>Eukaryota</taxon>
        <taxon>Metazoa</taxon>
        <taxon>Chordata</taxon>
        <taxon>Craniata</taxon>
        <taxon>Vertebrata</taxon>
        <taxon>Euteleostomi</taxon>
        <taxon>Mammalia</taxon>
        <taxon>Eutheria</taxon>
        <taxon>Euarchontoglires</taxon>
        <taxon>Primates</taxon>
        <taxon>Haplorrhini</taxon>
        <taxon>Catarrhini</taxon>
        <taxon>Hominidae</taxon>
        <taxon>Homo</taxon>
    </lineage>
</organism>
<comment type="function">
    <text evidence="20">Involved in vitamin D transport and storage, scavenging of extracellular G-actin, enhancement of the chemotactic activity of C5 alpha for neutrophils in inflammation and macrophage activation.</text>
</comment>
<comment type="subunit">
    <text evidence="1">Associates with membrane-bound immunoglobulin on the surface of B-lymphocytes and with IgG Fc receptor on the membranes of T-lymphocytes. Interacts with LRP2; the interaction is required for renal uptake of GC in complex with 25-hydroxyvitamin D3 (By similarity).</text>
</comment>
<comment type="subcellular location">
    <subcellularLocation>
        <location evidence="11">Secreted</location>
    </subcellularLocation>
</comment>
<comment type="alternative products">
    <event type="alternative splicing"/>
    <isoform>
        <id>P02774-1</id>
        <name>1</name>
        <sequence type="displayed"/>
    </isoform>
    <isoform>
        <id>P02774-2</id>
        <name>2</name>
        <sequence type="described" ref="VSP_038427"/>
    </isoform>
    <isoform>
        <id>P02774-3</id>
        <name>3</name>
        <sequence type="described" ref="VSP_044523"/>
    </isoform>
</comment>
<comment type="tissue specificity">
    <text evidence="7 10 20">Expressed in the liver. Found in plasma, ascites, cerebrospinal fluid and urine.</text>
</comment>
<comment type="PTM">
    <text evidence="6 7 20">Allele GC*1S is O-glycosylated at Thr-436 (PubMed:20079467). The trisaccharide sugar moiety can be modified by the successive removal of neuraminic acid and galactose leaving an O-mceeN-acetyl-galactosamine. This conversion is thought to produce a macrophage-activating factor (Gc-MAF). Only a minor proportion of plasma GC is O-glycosylated (PubMed:17360250). The potential N-glycosylation site predicted at Asn-288 is thought to be nonglycosylated.</text>
</comment>
<comment type="polymorphism">
    <text>Over 80 variants of human DBP have been identified. The three most common alleles are called GC*1F, GC*1S, and GC*2. The sequence shown is that of the GC*1A1 allele.</text>
</comment>
<comment type="miscellaneous">
    <molecule>Isoform 2</molecule>
    <text evidence="19">May be produced at very low levels due to a premature stop codon in the mRNA, leading to nonsense-mediated mRNA decay.</text>
</comment>
<comment type="similarity">
    <text evidence="2">Belongs to the ALB/AFP/VDB family.</text>
</comment>
<comment type="sequence caution" evidence="19">
    <conflict type="erroneous translation">
        <sequence resource="EMBL-CDS" id="BAG60654"/>
    </conflict>
    <text>Wrong choice of CDS.</text>
</comment>
<protein>
    <recommendedName>
        <fullName>Vitamin D-binding protein</fullName>
        <shortName>DBP</shortName>
        <shortName>VDB</shortName>
    </recommendedName>
    <alternativeName>
        <fullName evidence="18">Gc protein-derived macrophage activating factor</fullName>
        <shortName>Gc-MAF</shortName>
        <shortName evidence="18">GcMAF</shortName>
    </alternativeName>
    <alternativeName>
        <fullName>Gc-globulin</fullName>
    </alternativeName>
    <alternativeName>
        <fullName>Group-specific component</fullName>
        <shortName evidence="18">Gc</shortName>
    </alternativeName>
    <alternativeName>
        <fullName>Vitamin D-binding protein-macrophage activating factor</fullName>
        <shortName>DBP-maf</shortName>
    </alternativeName>
</protein>
<reference key="1">
    <citation type="journal article" date="1985" name="J. Clin. Invest.">
        <title>Serum vitamin D-binding protein is a third member of the albumin and alpha fetoprotein gene family.</title>
        <authorList>
            <person name="Cooke N.E."/>
            <person name="David E.V."/>
        </authorList>
    </citation>
    <scope>NUCLEOTIDE SEQUENCE [MRNA] (ISOFORM 1)</scope>
    <scope>TISSUE SPECIFICITY</scope>
    <scope>VARIANTS GLU-432 AND ARG-445</scope>
</reference>
<reference key="2">
    <citation type="journal article" date="1985" name="Proc. Natl. Acad. Sci. U.S.A.">
        <title>Human group-specific component (Gc) is a member of the albumin family.</title>
        <authorList>
            <person name="Yang F."/>
            <person name="Brune J.L."/>
            <person name="Naylor S.L."/>
            <person name="Cupples R.L."/>
            <person name="Naberhaus K.H."/>
            <person name="Bowman B.H."/>
        </authorList>
    </citation>
    <scope>NUCLEOTIDE SEQUENCE [MRNA] (ISOFORM 1)</scope>
    <scope>VARIANTS LYS-436 AND ARG-445</scope>
</reference>
<reference key="3">
    <citation type="journal article" date="1993" name="Biochim. Biophys. Acta">
        <title>Sequence and organization of the human vitamin D-binding protein gene.</title>
        <authorList>
            <person name="Braun A."/>
            <person name="Kofler A."/>
            <person name="Morawietz S."/>
            <person name="Cleve H."/>
        </authorList>
    </citation>
    <scope>NUCLEOTIDE SEQUENCE [GENOMIC DNA]</scope>
    <scope>VARIANTS GLU-432 AND ARG-445</scope>
</reference>
<reference key="4">
    <citation type="journal article" date="1993" name="Genomics">
        <title>Complete structure of the human Gc gene: differences and similarities between members of the albumin gene family.</title>
        <authorList>
            <person name="Witke W.F."/>
            <person name="Gibbs P.E."/>
            <person name="Zielinski R."/>
            <person name="Yang F."/>
            <person name="Bowman B.H."/>
            <person name="Dugaiczyk A."/>
        </authorList>
    </citation>
    <scope>NUCLEOTIDE SEQUENCE [GENOMIC DNA]</scope>
    <scope>VARIANTS GLU-432 AND ARG-445</scope>
</reference>
<reference key="5">
    <citation type="journal article" date="2004" name="Nat. Genet.">
        <title>Complete sequencing and characterization of 21,243 full-length human cDNAs.</title>
        <authorList>
            <person name="Ota T."/>
            <person name="Suzuki Y."/>
            <person name="Nishikawa T."/>
            <person name="Otsuki T."/>
            <person name="Sugiyama T."/>
            <person name="Irie R."/>
            <person name="Wakamatsu A."/>
            <person name="Hayashi K."/>
            <person name="Sato H."/>
            <person name="Nagai K."/>
            <person name="Kimura K."/>
            <person name="Makita H."/>
            <person name="Sekine M."/>
            <person name="Obayashi M."/>
            <person name="Nishi T."/>
            <person name="Shibahara T."/>
            <person name="Tanaka T."/>
            <person name="Ishii S."/>
            <person name="Yamamoto J."/>
            <person name="Saito K."/>
            <person name="Kawai Y."/>
            <person name="Isono Y."/>
            <person name="Nakamura Y."/>
            <person name="Nagahari K."/>
            <person name="Murakami K."/>
            <person name="Yasuda T."/>
            <person name="Iwayanagi T."/>
            <person name="Wagatsuma M."/>
            <person name="Shiratori A."/>
            <person name="Sudo H."/>
            <person name="Hosoiri T."/>
            <person name="Kaku Y."/>
            <person name="Kodaira H."/>
            <person name="Kondo H."/>
            <person name="Sugawara M."/>
            <person name="Takahashi M."/>
            <person name="Kanda K."/>
            <person name="Yokoi T."/>
            <person name="Furuya T."/>
            <person name="Kikkawa E."/>
            <person name="Omura Y."/>
            <person name="Abe K."/>
            <person name="Kamihara K."/>
            <person name="Katsuta N."/>
            <person name="Sato K."/>
            <person name="Tanikawa M."/>
            <person name="Yamazaki M."/>
            <person name="Ninomiya K."/>
            <person name="Ishibashi T."/>
            <person name="Yamashita H."/>
            <person name="Murakawa K."/>
            <person name="Fujimori K."/>
            <person name="Tanai H."/>
            <person name="Kimata M."/>
            <person name="Watanabe M."/>
            <person name="Hiraoka S."/>
            <person name="Chiba Y."/>
            <person name="Ishida S."/>
            <person name="Ono Y."/>
            <person name="Takiguchi S."/>
            <person name="Watanabe S."/>
            <person name="Yosida M."/>
            <person name="Hotuta T."/>
            <person name="Kusano J."/>
            <person name="Kanehori K."/>
            <person name="Takahashi-Fujii A."/>
            <person name="Hara H."/>
            <person name="Tanase T.-O."/>
            <person name="Nomura Y."/>
            <person name="Togiya S."/>
            <person name="Komai F."/>
            <person name="Hara R."/>
            <person name="Takeuchi K."/>
            <person name="Arita M."/>
            <person name="Imose N."/>
            <person name="Musashino K."/>
            <person name="Yuuki H."/>
            <person name="Oshima A."/>
            <person name="Sasaki N."/>
            <person name="Aotsuka S."/>
            <person name="Yoshikawa Y."/>
            <person name="Matsunawa H."/>
            <person name="Ichihara T."/>
            <person name="Shiohata N."/>
            <person name="Sano S."/>
            <person name="Moriya S."/>
            <person name="Momiyama H."/>
            <person name="Satoh N."/>
            <person name="Takami S."/>
            <person name="Terashima Y."/>
            <person name="Suzuki O."/>
            <person name="Nakagawa S."/>
            <person name="Senoh A."/>
            <person name="Mizoguchi H."/>
            <person name="Goto Y."/>
            <person name="Shimizu F."/>
            <person name="Wakebe H."/>
            <person name="Hishigaki H."/>
            <person name="Watanabe T."/>
            <person name="Sugiyama A."/>
            <person name="Takemoto M."/>
            <person name="Kawakami B."/>
            <person name="Yamazaki M."/>
            <person name="Watanabe K."/>
            <person name="Kumagai A."/>
            <person name="Itakura S."/>
            <person name="Fukuzumi Y."/>
            <person name="Fujimori Y."/>
            <person name="Komiyama M."/>
            <person name="Tashiro H."/>
            <person name="Tanigami A."/>
            <person name="Fujiwara T."/>
            <person name="Ono T."/>
            <person name="Yamada K."/>
            <person name="Fujii Y."/>
            <person name="Ozaki K."/>
            <person name="Hirao M."/>
            <person name="Ohmori Y."/>
            <person name="Kawabata A."/>
            <person name="Hikiji T."/>
            <person name="Kobatake N."/>
            <person name="Inagaki H."/>
            <person name="Ikema Y."/>
            <person name="Okamoto S."/>
            <person name="Okitani R."/>
            <person name="Kawakami T."/>
            <person name="Noguchi S."/>
            <person name="Itoh T."/>
            <person name="Shigeta K."/>
            <person name="Senba T."/>
            <person name="Matsumura K."/>
            <person name="Nakajima Y."/>
            <person name="Mizuno T."/>
            <person name="Morinaga M."/>
            <person name="Sasaki M."/>
            <person name="Togashi T."/>
            <person name="Oyama M."/>
            <person name="Hata H."/>
            <person name="Watanabe M."/>
            <person name="Komatsu T."/>
            <person name="Mizushima-Sugano J."/>
            <person name="Satoh T."/>
            <person name="Shirai Y."/>
            <person name="Takahashi Y."/>
            <person name="Nakagawa K."/>
            <person name="Okumura K."/>
            <person name="Nagase T."/>
            <person name="Nomura N."/>
            <person name="Kikuchi H."/>
            <person name="Masuho Y."/>
            <person name="Yamashita R."/>
            <person name="Nakai K."/>
            <person name="Yada T."/>
            <person name="Nakamura Y."/>
            <person name="Ohara O."/>
            <person name="Isogai T."/>
            <person name="Sugano S."/>
        </authorList>
    </citation>
    <scope>NUCLEOTIDE SEQUENCE [LARGE SCALE MRNA] (ISOFORMS 1 AND 3)</scope>
    <scope>NUCLEOTIDE SEQUENCE [LARGE SCALE MRNA] OF 1-47 (ISOFORM 2)</scope>
    <scope>VARIANTS GLU-432; LYS-436 AND ARG-445</scope>
    <source>
        <tissue>Liver</tissue>
    </source>
</reference>
<reference key="6">
    <citation type="submission" date="2005-04" db="EMBL/GenBank/DDBJ databases">
        <authorList>
            <person name="Totoki Y."/>
            <person name="Toyoda A."/>
            <person name="Takeda T."/>
            <person name="Sakaki Y."/>
            <person name="Tanaka A."/>
            <person name="Yokoyama S."/>
        </authorList>
    </citation>
    <scope>NUCLEOTIDE SEQUENCE [LARGE SCALE MRNA] (ISOFORM 1)</scope>
    <scope>VARIANTS GLU-432 AND ARG-445</scope>
    <source>
        <tissue>Kidney</tissue>
    </source>
</reference>
<reference key="7">
    <citation type="journal article" date="2005" name="Nature">
        <title>Generation and annotation of the DNA sequences of human chromosomes 2 and 4.</title>
        <authorList>
            <person name="Hillier L.W."/>
            <person name="Graves T.A."/>
            <person name="Fulton R.S."/>
            <person name="Fulton L.A."/>
            <person name="Pepin K.H."/>
            <person name="Minx P."/>
            <person name="Wagner-McPherson C."/>
            <person name="Layman D."/>
            <person name="Wylie K."/>
            <person name="Sekhon M."/>
            <person name="Becker M.C."/>
            <person name="Fewell G.A."/>
            <person name="Delehaunty K.D."/>
            <person name="Miner T.L."/>
            <person name="Nash W.E."/>
            <person name="Kremitzki C."/>
            <person name="Oddy L."/>
            <person name="Du H."/>
            <person name="Sun H."/>
            <person name="Bradshaw-Cordum H."/>
            <person name="Ali J."/>
            <person name="Carter J."/>
            <person name="Cordes M."/>
            <person name="Harris A."/>
            <person name="Isak A."/>
            <person name="van Brunt A."/>
            <person name="Nguyen C."/>
            <person name="Du F."/>
            <person name="Courtney L."/>
            <person name="Kalicki J."/>
            <person name="Ozersky P."/>
            <person name="Abbott S."/>
            <person name="Armstrong J."/>
            <person name="Belter E.A."/>
            <person name="Caruso L."/>
            <person name="Cedroni M."/>
            <person name="Cotton M."/>
            <person name="Davidson T."/>
            <person name="Desai A."/>
            <person name="Elliott G."/>
            <person name="Erb T."/>
            <person name="Fronick C."/>
            <person name="Gaige T."/>
            <person name="Haakenson W."/>
            <person name="Haglund K."/>
            <person name="Holmes A."/>
            <person name="Harkins R."/>
            <person name="Kim K."/>
            <person name="Kruchowski S.S."/>
            <person name="Strong C.M."/>
            <person name="Grewal N."/>
            <person name="Goyea E."/>
            <person name="Hou S."/>
            <person name="Levy A."/>
            <person name="Martinka S."/>
            <person name="Mead K."/>
            <person name="McLellan M.D."/>
            <person name="Meyer R."/>
            <person name="Randall-Maher J."/>
            <person name="Tomlinson C."/>
            <person name="Dauphin-Kohlberg S."/>
            <person name="Kozlowicz-Reilly A."/>
            <person name="Shah N."/>
            <person name="Swearengen-Shahid S."/>
            <person name="Snider J."/>
            <person name="Strong J.T."/>
            <person name="Thompson J."/>
            <person name="Yoakum M."/>
            <person name="Leonard S."/>
            <person name="Pearman C."/>
            <person name="Trani L."/>
            <person name="Radionenko M."/>
            <person name="Waligorski J.E."/>
            <person name="Wang C."/>
            <person name="Rock S.M."/>
            <person name="Tin-Wollam A.-M."/>
            <person name="Maupin R."/>
            <person name="Latreille P."/>
            <person name="Wendl M.C."/>
            <person name="Yang S.-P."/>
            <person name="Pohl C."/>
            <person name="Wallis J.W."/>
            <person name="Spieth J."/>
            <person name="Bieri T.A."/>
            <person name="Berkowicz N."/>
            <person name="Nelson J.O."/>
            <person name="Osborne J."/>
            <person name="Ding L."/>
            <person name="Meyer R."/>
            <person name="Sabo A."/>
            <person name="Shotland Y."/>
            <person name="Sinha P."/>
            <person name="Wohldmann P.E."/>
            <person name="Cook L.L."/>
            <person name="Hickenbotham M.T."/>
            <person name="Eldred J."/>
            <person name="Williams D."/>
            <person name="Jones T.A."/>
            <person name="She X."/>
            <person name="Ciccarelli F.D."/>
            <person name="Izaurralde E."/>
            <person name="Taylor J."/>
            <person name="Schmutz J."/>
            <person name="Myers R.M."/>
            <person name="Cox D.R."/>
            <person name="Huang X."/>
            <person name="McPherson J.D."/>
            <person name="Mardis E.R."/>
            <person name="Clifton S.W."/>
            <person name="Warren W.C."/>
            <person name="Chinwalla A.T."/>
            <person name="Eddy S.R."/>
            <person name="Marra M.A."/>
            <person name="Ovcharenko I."/>
            <person name="Furey T.S."/>
            <person name="Miller W."/>
            <person name="Eichler E.E."/>
            <person name="Bork P."/>
            <person name="Suyama M."/>
            <person name="Torrents D."/>
            <person name="Waterston R.H."/>
            <person name="Wilson R.K."/>
        </authorList>
    </citation>
    <scope>NUCLEOTIDE SEQUENCE [LARGE SCALE GENOMIC DNA]</scope>
</reference>
<reference key="8">
    <citation type="submission" date="2005-07" db="EMBL/GenBank/DDBJ databases">
        <authorList>
            <person name="Mural R.J."/>
            <person name="Istrail S."/>
            <person name="Sutton G.G."/>
            <person name="Florea L."/>
            <person name="Halpern A.L."/>
            <person name="Mobarry C.M."/>
            <person name="Lippert R."/>
            <person name="Walenz B."/>
            <person name="Shatkay H."/>
            <person name="Dew I."/>
            <person name="Miller J.R."/>
            <person name="Flanigan M.J."/>
            <person name="Edwards N.J."/>
            <person name="Bolanos R."/>
            <person name="Fasulo D."/>
            <person name="Halldorsson B.V."/>
            <person name="Hannenhalli S."/>
            <person name="Turner R."/>
            <person name="Yooseph S."/>
            <person name="Lu F."/>
            <person name="Nusskern D.R."/>
            <person name="Shue B.C."/>
            <person name="Zheng X.H."/>
            <person name="Zhong F."/>
            <person name="Delcher A.L."/>
            <person name="Huson D.H."/>
            <person name="Kravitz S.A."/>
            <person name="Mouchard L."/>
            <person name="Reinert K."/>
            <person name="Remington K.A."/>
            <person name="Clark A.G."/>
            <person name="Waterman M.S."/>
            <person name="Eichler E.E."/>
            <person name="Adams M.D."/>
            <person name="Hunkapiller M.W."/>
            <person name="Myers E.W."/>
            <person name="Venter J.C."/>
        </authorList>
    </citation>
    <scope>NUCLEOTIDE SEQUENCE [LARGE SCALE GENOMIC DNA]</scope>
    <scope>VARIANTS GLU-432 AND ARG-445</scope>
</reference>
<reference key="9">
    <citation type="journal article" date="2004" name="Genome Res.">
        <title>The status, quality, and expansion of the NIH full-length cDNA project: the Mammalian Gene Collection (MGC).</title>
        <authorList>
            <consortium name="The MGC Project Team"/>
        </authorList>
    </citation>
    <scope>NUCLEOTIDE SEQUENCE [LARGE SCALE MRNA] (ISOFORM 1)</scope>
    <scope>VARIANT ARG-445</scope>
    <source>
        <tissue>Liver</tissue>
    </source>
</reference>
<reference key="10">
    <citation type="journal article" date="1987" name="Gene">
        <title>The vitamin D-binding protein gene contains conserved nucleotide sequences that respond to heavy metal, adipocyte and mitotic signals.</title>
        <authorList>
            <person name="Yang F."/>
            <person name="Naberhaus K.H."/>
            <person name="Adrian G.S."/>
            <person name="Gardella J.M."/>
            <person name="Brissenden J.E."/>
            <person name="Bowman B.H."/>
        </authorList>
    </citation>
    <scope>NUCLEOTIDE SEQUENCE [GENOMIC DNA] OF 1-19</scope>
</reference>
<reference key="11">
    <citation type="journal article" date="1986" name="Biochim. Biophys. Acta">
        <title>Complete amino acid sequence of human vitamin D-binding protein (group-specific component): evidence of a three-fold internal homology as in serum albumin and alpha-fetoprotein.</title>
        <authorList>
            <person name="Schoentgen F."/>
            <person name="Metz-Boutigue M.-H."/>
            <person name="Jolles J."/>
            <person name="Constans J."/>
            <person name="Jolles P."/>
        </authorList>
    </citation>
    <scope>PROTEIN SEQUENCE OF 17-474</scope>
    <scope>SUBCELLULAR LOCATION</scope>
</reference>
<reference key="12">
    <citation type="journal article" date="1979" name="Biochemistry">
        <title>Molecular basis for the three major forms of human serum vitamin D binding protein (group-specific component).</title>
        <authorList>
            <person name="Svasti J."/>
            <person name="Kurosky A."/>
            <person name="Bennett A."/>
            <person name="Bowman B.H."/>
        </authorList>
    </citation>
    <scope>PROTEIN SEQUENCE OF 17-31 AND 431-441</scope>
</reference>
<reference key="13">
    <citation type="journal article" date="2010" name="Biochim. Biophys. Acta">
        <title>The glycosylation and characterization of the candidate Gc macrophage activating factor.</title>
        <authorList>
            <person name="Ravnsborg T."/>
            <person name="Olsen D.T."/>
            <person name="Thysen A.H."/>
            <person name="Christiansen M."/>
            <person name="Houen G."/>
            <person name="Hoejrup P."/>
        </authorList>
    </citation>
    <scope>PROTEIN SEQUENCE OF 409-446 (ALLELE GC*1S)</scope>
    <scope>VARIANTS GLU-432 AND ARG-445</scope>
    <scope>TISSUE SPECIFICITY</scope>
    <scope>GLYCOSYLATION (ALLELE GC*1S)</scope>
</reference>
<reference key="14">
    <citation type="journal article" date="1995" name="Vox Sang.">
        <title>Characterization of mutants of the vitamin-D-binding protein/group specific component: GC aborigine (1A1) from Australian aborigines and South African blacks, and 2A9 from south Germany.</title>
        <authorList>
            <person name="Kofler A."/>
            <person name="Braun A."/>
            <person name="Jenkins T."/>
            <person name="Serjeantson S.W."/>
            <person name="Cleve H."/>
        </authorList>
    </citation>
    <scope>NUCLEOTIDE SEQUENCE [GENOMIC DNA] OF 430-446</scope>
    <scope>VARIANT CYS-445</scope>
</reference>
<reference key="15">
    <citation type="journal article" date="2005" name="Anticancer Res.">
        <title>Gc protein (vitamin D-binding protein): Gc genotyping and GcMAF precursor activity.</title>
        <authorList>
            <person name="Nagasawa H."/>
            <person name="Uto Y."/>
            <person name="Sasaki H."/>
            <person name="Okamura N."/>
            <person name="Murakami A."/>
            <person name="Kubo S."/>
            <person name="Kirk K.L."/>
            <person name="Hori H."/>
        </authorList>
    </citation>
    <scope>REVIEW</scope>
</reference>
<reference key="16">
    <citation type="journal article" date="2007" name="Biochim. Biophys. Acta">
        <title>Protein chemical characterization of Gc globulin (vitamin D-binding protein) isoforms; Gc-1f, Gc-1s and Gc-2.</title>
        <authorList>
            <person name="Christiansen M."/>
            <person name="Joergensen C.S."/>
            <person name="Laursen I."/>
            <person name="Hirschberg D."/>
            <person name="Hoejrup P."/>
            <person name="Houen G."/>
        </authorList>
    </citation>
    <scope>GLYCOSYLATION</scope>
</reference>
<reference key="17">
    <citation type="journal article" date="2011" name="BMC Syst. Biol.">
        <title>Initial characterization of the human central proteome.</title>
        <authorList>
            <person name="Burkard T.R."/>
            <person name="Planyavsky M."/>
            <person name="Kaupe I."/>
            <person name="Breitwieser F.P."/>
            <person name="Buerckstuemmer T."/>
            <person name="Bennett K.L."/>
            <person name="Superti-Furga G."/>
            <person name="Colinge J."/>
        </authorList>
    </citation>
    <scope>IDENTIFICATION BY MASS SPECTROMETRY [LARGE SCALE ANALYSIS]</scope>
</reference>
<reference key="18">
    <citation type="journal article" date="1992" name="Hum. Genet.">
        <title>Molecular analysis of the gene for the human vitamin-D-binding protein (group-specific component): allelic differences of the common genetic GC types.</title>
        <authorList>
            <person name="Braun A."/>
            <person name="Bichlmaier R."/>
            <person name="Cleve H."/>
        </authorList>
    </citation>
    <scope>VARIANTS GLU-432; LYS-436 AND ARG-445</scope>
</reference>
<reference key="19">
    <citation type="journal article" date="2002" name="Nat. Struct. Biol.">
        <title>A structural basis for the unique binding features of the human vitamin D-binding protein.</title>
        <authorList>
            <person name="Verboven C."/>
            <person name="Rabijns A."/>
            <person name="De Maeyer M."/>
            <person name="Van Baelen H."/>
            <person name="Bouillon R."/>
            <person name="De Ranter C."/>
        </authorList>
    </citation>
    <scope>X-RAY CRYSTALLOGRAPHY (2.31 ANGSTROMS) OF 29-473</scope>
</reference>
<reference key="20">
    <citation type="journal article" date="2014" name="J. Proteomics">
        <title>An enzyme assisted RP-RPLC approach for in-depth analysis of human liver phosphoproteome.</title>
        <authorList>
            <person name="Bian Y."/>
            <person name="Song C."/>
            <person name="Cheng K."/>
            <person name="Dong M."/>
            <person name="Wang F."/>
            <person name="Huang J."/>
            <person name="Sun D."/>
            <person name="Wang L."/>
            <person name="Ye M."/>
            <person name="Zou H."/>
        </authorList>
    </citation>
    <scope>IDENTIFICATION BY MASS SPECTROMETRY [LARGE SCALE ANALYSIS]</scope>
    <source>
        <tissue>Liver</tissue>
    </source>
</reference>
<dbReference type="EMBL" id="M12654">
    <property type="protein sequence ID" value="AAA52173.1"/>
    <property type="molecule type" value="mRNA"/>
</dbReference>
<dbReference type="EMBL" id="X03178">
    <property type="protein sequence ID" value="CAA26938.1"/>
    <property type="molecule type" value="mRNA"/>
</dbReference>
<dbReference type="EMBL" id="S67480">
    <property type="protein sequence ID" value="AAB29423.1"/>
    <property type="molecule type" value="Genomic_DNA"/>
</dbReference>
<dbReference type="EMBL" id="S67474">
    <property type="protein sequence ID" value="AAB29423.1"/>
    <property type="status" value="JOINED"/>
    <property type="molecule type" value="Genomic_DNA"/>
</dbReference>
<dbReference type="EMBL" id="S67476">
    <property type="protein sequence ID" value="AAB29423.1"/>
    <property type="status" value="JOINED"/>
    <property type="molecule type" value="Genomic_DNA"/>
</dbReference>
<dbReference type="EMBL" id="S67478">
    <property type="protein sequence ID" value="AAB29423.1"/>
    <property type="status" value="JOINED"/>
    <property type="molecule type" value="Genomic_DNA"/>
</dbReference>
<dbReference type="EMBL" id="S67479">
    <property type="protein sequence ID" value="AAB29423.1"/>
    <property type="status" value="JOINED"/>
    <property type="molecule type" value="Genomic_DNA"/>
</dbReference>
<dbReference type="EMBL" id="S67526">
    <property type="protein sequence ID" value="AAB29423.1"/>
    <property type="status" value="JOINED"/>
    <property type="molecule type" value="Genomic_DNA"/>
</dbReference>
<dbReference type="EMBL" id="L10641">
    <property type="protein sequence ID" value="AAA61704.1"/>
    <property type="molecule type" value="Genomic_DNA"/>
</dbReference>
<dbReference type="EMBL" id="AK290827">
    <property type="protein sequence ID" value="BAF83516.1"/>
    <property type="molecule type" value="mRNA"/>
</dbReference>
<dbReference type="EMBL" id="AK298433">
    <property type="protein sequence ID" value="BAG60654.1"/>
    <property type="status" value="ALT_SEQ"/>
    <property type="molecule type" value="mRNA"/>
</dbReference>
<dbReference type="EMBL" id="AK309595">
    <property type="status" value="NOT_ANNOTATED_CDS"/>
    <property type="molecule type" value="mRNA"/>
</dbReference>
<dbReference type="EMBL" id="AK315853">
    <property type="protein sequence ID" value="BAF98744.1"/>
    <property type="molecule type" value="mRNA"/>
</dbReference>
<dbReference type="EMBL" id="AK223458">
    <property type="protein sequence ID" value="BAD97178.1"/>
    <property type="molecule type" value="mRNA"/>
</dbReference>
<dbReference type="EMBL" id="AC024722">
    <property type="status" value="NOT_ANNOTATED_CDS"/>
    <property type="molecule type" value="Genomic_DNA"/>
</dbReference>
<dbReference type="EMBL" id="CH471057">
    <property type="protein sequence ID" value="EAX05645.1"/>
    <property type="molecule type" value="Genomic_DNA"/>
</dbReference>
<dbReference type="EMBL" id="BC057228">
    <property type="protein sequence ID" value="AAH57228.1"/>
    <property type="molecule type" value="mRNA"/>
</dbReference>
<dbReference type="EMBL" id="M17156">
    <property type="protein sequence ID" value="AAA19662.2"/>
    <property type="molecule type" value="Genomic_DNA"/>
</dbReference>
<dbReference type="EMBL" id="S77129">
    <property type="protein sequence ID" value="AAD14249.1"/>
    <property type="status" value="ALT_SEQ"/>
    <property type="molecule type" value="Genomic_DNA"/>
</dbReference>
<dbReference type="EMBL" id="S77130">
    <property type="protein sequence ID" value="AAD14250.1"/>
    <property type="status" value="ALT_SEQ"/>
    <property type="molecule type" value="Genomic_DNA"/>
</dbReference>
<dbReference type="CCDS" id="CCDS3550.1">
    <molecule id="P02774-1"/>
</dbReference>
<dbReference type="CCDS" id="CCDS56332.1">
    <molecule id="P02774-3"/>
</dbReference>
<dbReference type="PIR" id="A94076">
    <property type="entry name" value="VYHUD"/>
</dbReference>
<dbReference type="RefSeq" id="NP_000574.2">
    <molecule id="P02774-1"/>
    <property type="nucleotide sequence ID" value="NM_000583.3"/>
</dbReference>
<dbReference type="RefSeq" id="NP_001191235.1">
    <molecule id="P02774-1"/>
    <property type="nucleotide sequence ID" value="NM_001204306.1"/>
</dbReference>
<dbReference type="RefSeq" id="NP_001191236.1">
    <molecule id="P02774-3"/>
    <property type="nucleotide sequence ID" value="NM_001204307.1"/>
</dbReference>
<dbReference type="PDB" id="1J78">
    <property type="method" value="X-ray"/>
    <property type="resolution" value="2.31 A"/>
    <property type="chains" value="A/B=17-474"/>
</dbReference>
<dbReference type="PDB" id="1J7E">
    <property type="method" value="X-ray"/>
    <property type="resolution" value="2.55 A"/>
    <property type="chains" value="A/B=17-474"/>
</dbReference>
<dbReference type="PDB" id="1KW2">
    <property type="method" value="X-ray"/>
    <property type="resolution" value="2.15 A"/>
    <property type="chains" value="A/B=17-474"/>
</dbReference>
<dbReference type="PDB" id="1KXP">
    <property type="method" value="X-ray"/>
    <property type="resolution" value="2.10 A"/>
    <property type="chains" value="D=17-474"/>
</dbReference>
<dbReference type="PDB" id="1LOT">
    <property type="method" value="X-ray"/>
    <property type="resolution" value="2.50 A"/>
    <property type="chains" value="A=17-474"/>
</dbReference>
<dbReference type="PDB" id="1MA9">
    <property type="method" value="X-ray"/>
    <property type="resolution" value="2.40 A"/>
    <property type="chains" value="A=17-474"/>
</dbReference>
<dbReference type="PDBsum" id="1J78"/>
<dbReference type="PDBsum" id="1J7E"/>
<dbReference type="PDBsum" id="1KW2"/>
<dbReference type="PDBsum" id="1KXP"/>
<dbReference type="PDBsum" id="1LOT"/>
<dbReference type="PDBsum" id="1MA9"/>
<dbReference type="SMR" id="P02774"/>
<dbReference type="BioGRID" id="108908">
    <property type="interactions" value="67"/>
</dbReference>
<dbReference type="DIP" id="DIP-17038N"/>
<dbReference type="FunCoup" id="P02774">
    <property type="interactions" value="127"/>
</dbReference>
<dbReference type="IntAct" id="P02774">
    <property type="interactions" value="37"/>
</dbReference>
<dbReference type="MINT" id="P02774"/>
<dbReference type="STRING" id="9606.ENSP00000421725"/>
<dbReference type="ChEMBL" id="CHEMBL2259"/>
<dbReference type="DrugBank" id="DB01436">
    <property type="generic name" value="Alfacalcidol"/>
</dbReference>
<dbReference type="DrugBank" id="DB00136">
    <property type="generic name" value="Calcitriol"/>
</dbReference>
<dbReference type="DrugBank" id="DB00169">
    <property type="generic name" value="Cholecalciferol"/>
</dbReference>
<dbReference type="DrugBank" id="DB00153">
    <property type="generic name" value="Ergocalciferol"/>
</dbReference>
<dbReference type="DrugBank" id="DB04224">
    <property type="generic name" value="Oleic Acid"/>
</dbReference>
<dbReference type="DrugBank" id="DB11094">
    <property type="generic name" value="Vitamin D"/>
</dbReference>
<dbReference type="DrugCentral" id="P02774"/>
<dbReference type="CarbonylDB" id="P02774"/>
<dbReference type="GlyConnect" id="619">
    <property type="glycosylation" value="1 N-Linked glycan (1 site), 1 O-Linked glycan"/>
</dbReference>
<dbReference type="GlyCosmos" id="P02774">
    <property type="glycosylation" value="1 site, 4 glycans"/>
</dbReference>
<dbReference type="GlyGen" id="P02774">
    <property type="glycosylation" value="3 sites, 8 N-linked glycans (1 site), 3 O-linked glycans (1 site)"/>
</dbReference>
<dbReference type="iPTMnet" id="P02774"/>
<dbReference type="PhosphoSitePlus" id="P02774"/>
<dbReference type="BioMuta" id="GC"/>
<dbReference type="DMDM" id="139641"/>
<dbReference type="REPRODUCTION-2DPAGE" id="IPI00555812"/>
<dbReference type="REPRODUCTION-2DPAGE" id="P02774"/>
<dbReference type="jPOST" id="P02774"/>
<dbReference type="MassIVE" id="P02774"/>
<dbReference type="PaxDb" id="9606-ENSP00000421725"/>
<dbReference type="PeptideAtlas" id="P02774"/>
<dbReference type="PRIDE" id="P02774"/>
<dbReference type="ProteomicsDB" id="13358"/>
<dbReference type="ProteomicsDB" id="51590">
    <molecule id="P02774-1"/>
</dbReference>
<dbReference type="ProteomicsDB" id="51591">
    <molecule id="P02774-2"/>
</dbReference>
<dbReference type="Antibodypedia" id="871">
    <property type="antibodies" value="815 antibodies from 40 providers"/>
</dbReference>
<dbReference type="DNASU" id="2638"/>
<dbReference type="Ensembl" id="ENST00000273951.13">
    <molecule id="P02774-1"/>
    <property type="protein sequence ID" value="ENSP00000273951.8"/>
    <property type="gene ID" value="ENSG00000145321.13"/>
</dbReference>
<dbReference type="Ensembl" id="ENST00000504199.5">
    <molecule id="P02774-3"/>
    <property type="protein sequence ID" value="ENSP00000421725.1"/>
    <property type="gene ID" value="ENSG00000145321.13"/>
</dbReference>
<dbReference type="GeneID" id="2638"/>
<dbReference type="KEGG" id="hsa:2638"/>
<dbReference type="MANE-Select" id="ENST00000273951.13">
    <property type="protein sequence ID" value="ENSP00000273951.8"/>
    <property type="RefSeq nucleotide sequence ID" value="NM_000583.4"/>
    <property type="RefSeq protein sequence ID" value="NP_000574.2"/>
</dbReference>
<dbReference type="UCSC" id="uc003hge.4">
    <molecule id="P02774-1"/>
    <property type="organism name" value="human"/>
</dbReference>
<dbReference type="AGR" id="HGNC:4187"/>
<dbReference type="CTD" id="2638"/>
<dbReference type="DisGeNET" id="2638"/>
<dbReference type="GeneCards" id="GC"/>
<dbReference type="HGNC" id="HGNC:4187">
    <property type="gene designation" value="GC"/>
</dbReference>
<dbReference type="HPA" id="ENSG00000145321">
    <property type="expression patterns" value="Tissue enriched (liver)"/>
</dbReference>
<dbReference type="MalaCards" id="GC"/>
<dbReference type="MIM" id="139200">
    <property type="type" value="gene"/>
</dbReference>
<dbReference type="neXtProt" id="NX_P02774"/>
<dbReference type="OpenTargets" id="ENSG00000145321"/>
<dbReference type="PharmGKB" id="PA28601"/>
<dbReference type="VEuPathDB" id="HostDB:ENSG00000145321"/>
<dbReference type="eggNOG" id="ENOG502QTPW">
    <property type="taxonomic scope" value="Eukaryota"/>
</dbReference>
<dbReference type="GeneTree" id="ENSGT00390000000113"/>
<dbReference type="HOGENOM" id="CLU_045992_0_0_1"/>
<dbReference type="InParanoid" id="P02774"/>
<dbReference type="OrthoDB" id="9874779at2759"/>
<dbReference type="PAN-GO" id="P02774">
    <property type="GO annotations" value="3 GO annotations based on evolutionary models"/>
</dbReference>
<dbReference type="PhylomeDB" id="P02774"/>
<dbReference type="TreeFam" id="TF335561"/>
<dbReference type="PathwayCommons" id="P02774"/>
<dbReference type="Reactome" id="R-HSA-196791">
    <property type="pathway name" value="Vitamin D (calciferol) metabolism"/>
</dbReference>
<dbReference type="SignaLink" id="P02774"/>
<dbReference type="SIGNOR" id="P02774"/>
<dbReference type="BioGRID-ORCS" id="2638">
    <property type="hits" value="16 hits in 1147 CRISPR screens"/>
</dbReference>
<dbReference type="ChiTaRS" id="GC">
    <property type="organism name" value="human"/>
</dbReference>
<dbReference type="EvolutionaryTrace" id="P02774"/>
<dbReference type="GeneWiki" id="Vitamin_D-binding_protein"/>
<dbReference type="GenomeRNAi" id="2638"/>
<dbReference type="Pharos" id="P02774">
    <property type="development level" value="Tchem"/>
</dbReference>
<dbReference type="PRO" id="PR:P02774"/>
<dbReference type="Proteomes" id="UP000005640">
    <property type="component" value="Chromosome 4"/>
</dbReference>
<dbReference type="RNAct" id="P02774">
    <property type="molecule type" value="protein"/>
</dbReference>
<dbReference type="Bgee" id="ENSG00000145321">
    <property type="expression patterns" value="Expressed in liver and 113 other cell types or tissues"/>
</dbReference>
<dbReference type="ExpressionAtlas" id="P02774">
    <property type="expression patterns" value="baseline and differential"/>
</dbReference>
<dbReference type="GO" id="GO:0072562">
    <property type="term" value="C:blood microparticle"/>
    <property type="evidence" value="ECO:0007005"/>
    <property type="project" value="UniProtKB"/>
</dbReference>
<dbReference type="GO" id="GO:0005737">
    <property type="term" value="C:cytoplasm"/>
    <property type="evidence" value="ECO:0000318"/>
    <property type="project" value="GO_Central"/>
</dbReference>
<dbReference type="GO" id="GO:0005829">
    <property type="term" value="C:cytosol"/>
    <property type="evidence" value="ECO:0000304"/>
    <property type="project" value="Reactome"/>
</dbReference>
<dbReference type="GO" id="GO:0070062">
    <property type="term" value="C:extracellular exosome"/>
    <property type="evidence" value="ECO:0007005"/>
    <property type="project" value="UniProtKB"/>
</dbReference>
<dbReference type="GO" id="GO:0005576">
    <property type="term" value="C:extracellular region"/>
    <property type="evidence" value="ECO:0000304"/>
    <property type="project" value="Reactome"/>
</dbReference>
<dbReference type="GO" id="GO:0005615">
    <property type="term" value="C:extracellular space"/>
    <property type="evidence" value="ECO:0007005"/>
    <property type="project" value="UniProtKB"/>
</dbReference>
<dbReference type="GO" id="GO:0043202">
    <property type="term" value="C:lysosomal lumen"/>
    <property type="evidence" value="ECO:0000304"/>
    <property type="project" value="Reactome"/>
</dbReference>
<dbReference type="GO" id="GO:0003779">
    <property type="term" value="F:actin binding"/>
    <property type="evidence" value="ECO:0000353"/>
    <property type="project" value="UniProtKB"/>
</dbReference>
<dbReference type="GO" id="GO:1902118">
    <property type="term" value="F:calcidiol binding"/>
    <property type="evidence" value="ECO:0000314"/>
    <property type="project" value="UniProtKB"/>
</dbReference>
<dbReference type="GO" id="GO:0005499">
    <property type="term" value="F:vitamin D binding"/>
    <property type="evidence" value="ECO:0000318"/>
    <property type="project" value="GO_Central"/>
</dbReference>
<dbReference type="GO" id="GO:0090482">
    <property type="term" value="F:vitamin transmembrane transporter activity"/>
    <property type="evidence" value="ECO:0007669"/>
    <property type="project" value="InterPro"/>
</dbReference>
<dbReference type="GO" id="GO:0042359">
    <property type="term" value="P:vitamin D metabolic process"/>
    <property type="evidence" value="ECO:0000318"/>
    <property type="project" value="GO_Central"/>
</dbReference>
<dbReference type="GO" id="GO:0051180">
    <property type="term" value="P:vitamin transport"/>
    <property type="evidence" value="ECO:0000304"/>
    <property type="project" value="ProtInc"/>
</dbReference>
<dbReference type="CDD" id="cd00015">
    <property type="entry name" value="ALBUMIN"/>
    <property type="match status" value="1"/>
</dbReference>
<dbReference type="FunFam" id="1.10.246.10:FF:000007">
    <property type="entry name" value="Vitamin D-binding protein"/>
    <property type="match status" value="1"/>
</dbReference>
<dbReference type="FunFam" id="1.10.246.10:FF:000008">
    <property type="entry name" value="Vitamin D-binding protein"/>
    <property type="match status" value="1"/>
</dbReference>
<dbReference type="FunFam" id="1.10.246.10:FF:000009">
    <property type="entry name" value="Vitamin D-binding protein"/>
    <property type="match status" value="1"/>
</dbReference>
<dbReference type="FunFam" id="1.10.246.10:FF:000010">
    <property type="entry name" value="Vitamin D-binding protein"/>
    <property type="match status" value="1"/>
</dbReference>
<dbReference type="FunFam" id="1.10.246.10:FF:000011">
    <property type="entry name" value="Vitamin D-binding protein"/>
    <property type="match status" value="1"/>
</dbReference>
<dbReference type="Gene3D" id="1.10.246.10">
    <property type="match status" value="5"/>
</dbReference>
<dbReference type="IDEAL" id="IID00264"/>
<dbReference type="InterPro" id="IPR000264">
    <property type="entry name" value="ALB/AFP/VDB"/>
</dbReference>
<dbReference type="InterPro" id="IPR020858">
    <property type="entry name" value="Serum_albumin-like"/>
</dbReference>
<dbReference type="InterPro" id="IPR020857">
    <property type="entry name" value="Serum_albumin_CS"/>
</dbReference>
<dbReference type="InterPro" id="IPR014760">
    <property type="entry name" value="Serum_albumin_N"/>
</dbReference>
<dbReference type="InterPro" id="IPR000213">
    <property type="entry name" value="VitD-bd"/>
</dbReference>
<dbReference type="InterPro" id="IPR015247">
    <property type="entry name" value="VitD-bind_III"/>
</dbReference>
<dbReference type="PANTHER" id="PTHR11385">
    <property type="entry name" value="SERUM ALBUMIN-RELATED"/>
    <property type="match status" value="1"/>
</dbReference>
<dbReference type="PANTHER" id="PTHR11385:SF11">
    <property type="entry name" value="VITAMIN D-BINDING PROTEIN"/>
    <property type="match status" value="1"/>
</dbReference>
<dbReference type="Pfam" id="PF00273">
    <property type="entry name" value="Serum_albumin"/>
    <property type="match status" value="2"/>
</dbReference>
<dbReference type="Pfam" id="PF09164">
    <property type="entry name" value="VitD-bind_III"/>
    <property type="match status" value="1"/>
</dbReference>
<dbReference type="PRINTS" id="PR00802">
    <property type="entry name" value="SERUMALBUMIN"/>
</dbReference>
<dbReference type="PRINTS" id="PR00804">
    <property type="entry name" value="VITAMNDBNDNG"/>
</dbReference>
<dbReference type="SMART" id="SM00103">
    <property type="entry name" value="ALBUMIN"/>
    <property type="match status" value="2"/>
</dbReference>
<dbReference type="SUPFAM" id="SSF48552">
    <property type="entry name" value="Serum albumin-like"/>
    <property type="match status" value="3"/>
</dbReference>
<dbReference type="PROSITE" id="PS00212">
    <property type="entry name" value="ALBUMIN_1"/>
    <property type="match status" value="1"/>
</dbReference>
<dbReference type="PROSITE" id="PS51438">
    <property type="entry name" value="ALBUMIN_2"/>
    <property type="match status" value="2"/>
</dbReference>
<feature type="signal peptide" evidence="8 11">
    <location>
        <begin position="1"/>
        <end position="16"/>
    </location>
</feature>
<feature type="chain" id="PRO_0000001102" description="Vitamin D-binding protein">
    <location>
        <begin position="17"/>
        <end position="474"/>
    </location>
</feature>
<feature type="domain" description="Albumin 1" evidence="2">
    <location>
        <begin position="17"/>
        <end position="208"/>
    </location>
</feature>
<feature type="domain" description="Albumin 2" evidence="2">
    <location>
        <begin position="209"/>
        <end position="394"/>
    </location>
</feature>
<feature type="domain" description="Albumin 3" evidence="2">
    <location>
        <begin position="395"/>
        <end position="474"/>
    </location>
</feature>
<feature type="disulfide bond">
    <location>
        <begin position="29"/>
        <end position="75"/>
    </location>
</feature>
<feature type="disulfide bond" evidence="2">
    <location>
        <begin position="74"/>
        <end position="83"/>
    </location>
</feature>
<feature type="disulfide bond">
    <location>
        <begin position="96"/>
        <end position="112"/>
    </location>
</feature>
<feature type="disulfide bond">
    <location>
        <begin position="111"/>
        <end position="122"/>
    </location>
</feature>
<feature type="disulfide bond">
    <location>
        <begin position="145"/>
        <end position="190"/>
    </location>
</feature>
<feature type="disulfide bond">
    <location>
        <begin position="189"/>
        <end position="198"/>
    </location>
</feature>
<feature type="disulfide bond">
    <location>
        <begin position="220"/>
        <end position="266"/>
    </location>
</feature>
<feature type="disulfide bond">
    <location>
        <begin position="265"/>
        <end position="273"/>
    </location>
</feature>
<feature type="disulfide bond">
    <location>
        <begin position="286"/>
        <end position="300"/>
    </location>
</feature>
<feature type="disulfide bond">
    <location>
        <begin position="299"/>
        <end position="311"/>
    </location>
</feature>
<feature type="disulfide bond">
    <location>
        <begin position="335"/>
        <end position="376"/>
    </location>
</feature>
<feature type="disulfide bond">
    <location>
        <begin position="375"/>
        <end position="384"/>
    </location>
</feature>
<feature type="disulfide bond">
    <location>
        <begin position="407"/>
        <end position="453"/>
    </location>
</feature>
<feature type="disulfide bond">
    <location>
        <begin position="452"/>
        <end position="462"/>
    </location>
</feature>
<feature type="splice variant" id="VSP_038427" description="In isoform 2." evidence="17">
    <location>
        <begin position="1"/>
        <end position="122"/>
    </location>
</feature>
<feature type="splice variant" id="VSP_044523" description="In isoform 3." evidence="17">
    <original>M</original>
    <variation>MLWSWSEERGGAARLSGRKM</variation>
    <location>
        <position position="1"/>
    </location>
</feature>
<feature type="sequence variant" id="VAR_000548" description="In allele GC*1S; dbSNP:rs7041." evidence="3 4 7 10 12 14 15 16">
    <original>D</original>
    <variation>E</variation>
    <location>
        <position position="432"/>
    </location>
</feature>
<feature type="sequence variant" id="VAR_000549" description="In allele GC*2, allele GC*2A9; dbSNP:rs4588." evidence="3 4 9 13">
    <original>T</original>
    <variation>K</variation>
    <location>
        <position position="436"/>
    </location>
</feature>
<feature type="sequence variant" id="VAR_014120" description="In allele GC*2A9; requires 2 nucleotide substitutions." evidence="13">
    <original>H</original>
    <variation>C</variation>
    <location>
        <position position="445"/>
    </location>
</feature>
<feature type="sequence variant" id="VAR_014121" description="In allele GC*1F, allele GC*2 and allele GC*1S; dbSNP:rs9016." evidence="3 4 5 7 9 10 12 13 14 15 16">
    <original>H</original>
    <variation>R</variation>
    <location>
        <position position="445"/>
    </location>
</feature>
<feature type="sequence conflict" description="In Ref. 1; AAA52173." evidence="19" ref="1">
    <original>G</original>
    <variation>E</variation>
    <location>
        <position position="168"/>
    </location>
</feature>
<feature type="sequence conflict" description="In Ref. 5; AK309595." evidence="19" ref="5">
    <original>L</original>
    <variation>P</variation>
    <location>
        <position position="183"/>
    </location>
</feature>
<feature type="sequence conflict" description="In Ref. 1; AAA52173." evidence="19" ref="1">
    <original>E</original>
    <variation>R</variation>
    <location>
        <position position="327"/>
    </location>
</feature>
<feature type="helix" evidence="23">
    <location>
        <begin position="23"/>
        <end position="35"/>
    </location>
</feature>
<feature type="helix" evidence="23">
    <location>
        <begin position="37"/>
        <end position="51"/>
    </location>
</feature>
<feature type="helix" evidence="23">
    <location>
        <begin position="57"/>
        <end position="74"/>
    </location>
</feature>
<feature type="strand" evidence="22">
    <location>
        <begin position="76"/>
        <end position="79"/>
    </location>
</feature>
<feature type="turn" evidence="21">
    <location>
        <begin position="80"/>
        <end position="82"/>
    </location>
</feature>
<feature type="helix" evidence="23">
    <location>
        <begin position="83"/>
        <end position="94"/>
    </location>
</feature>
<feature type="strand" evidence="21">
    <location>
        <begin position="97"/>
        <end position="99"/>
    </location>
</feature>
<feature type="helix" evidence="22">
    <location>
        <begin position="108"/>
        <end position="111"/>
    </location>
</feature>
<feature type="helix" evidence="22">
    <location>
        <begin position="116"/>
        <end position="125"/>
    </location>
</feature>
<feature type="helix" evidence="23">
    <location>
        <begin position="141"/>
        <end position="150"/>
    </location>
</feature>
<feature type="helix" evidence="23">
    <location>
        <begin position="152"/>
        <end position="166"/>
    </location>
</feature>
<feature type="helix" evidence="23">
    <location>
        <begin position="172"/>
        <end position="190"/>
    </location>
</feature>
<feature type="strand" evidence="23">
    <location>
        <begin position="192"/>
        <end position="194"/>
    </location>
</feature>
<feature type="helix" evidence="23">
    <location>
        <begin position="195"/>
        <end position="226"/>
    </location>
</feature>
<feature type="helix" evidence="23">
    <location>
        <begin position="228"/>
        <end position="242"/>
    </location>
</feature>
<feature type="helix" evidence="23">
    <location>
        <begin position="248"/>
        <end position="265"/>
    </location>
</feature>
<feature type="helix" evidence="23">
    <location>
        <begin position="273"/>
        <end position="289"/>
    </location>
</feature>
<feature type="turn" evidence="23">
    <location>
        <begin position="290"/>
        <end position="292"/>
    </location>
</feature>
<feature type="helix" evidence="23">
    <location>
        <begin position="294"/>
        <end position="299"/>
    </location>
</feature>
<feature type="strand" evidence="23">
    <location>
        <begin position="302"/>
        <end position="304"/>
    </location>
</feature>
<feature type="helix" evidence="23">
    <location>
        <begin position="305"/>
        <end position="314"/>
    </location>
</feature>
<feature type="helix" evidence="23">
    <location>
        <begin position="331"/>
        <end position="335"/>
    </location>
</feature>
<feature type="strand" evidence="24">
    <location>
        <begin position="336"/>
        <end position="338"/>
    </location>
</feature>
<feature type="helix" evidence="23">
    <location>
        <begin position="340"/>
        <end position="351"/>
    </location>
</feature>
<feature type="helix" evidence="23">
    <location>
        <begin position="358"/>
        <end position="373"/>
    </location>
</feature>
<feature type="turn" evidence="23">
    <location>
        <begin position="374"/>
        <end position="377"/>
    </location>
</feature>
<feature type="helix" evidence="23">
    <location>
        <begin position="381"/>
        <end position="406"/>
    </location>
</feature>
<feature type="turn" evidence="23">
    <location>
        <begin position="407"/>
        <end position="412"/>
    </location>
</feature>
<feature type="helix" evidence="23">
    <location>
        <begin position="415"/>
        <end position="429"/>
    </location>
</feature>
<feature type="helix" evidence="23">
    <location>
        <begin position="435"/>
        <end position="452"/>
    </location>
</feature>
<feature type="helix" evidence="23">
    <location>
        <begin position="459"/>
        <end position="470"/>
    </location>
</feature>
<keyword id="KW-0002">3D-structure</keyword>
<keyword id="KW-0009">Actin-binding</keyword>
<keyword id="KW-0025">Alternative splicing</keyword>
<keyword id="KW-0903">Direct protein sequencing</keyword>
<keyword id="KW-1015">Disulfide bond</keyword>
<keyword id="KW-0325">Glycoprotein</keyword>
<keyword id="KW-1267">Proteomics identification</keyword>
<keyword id="KW-1185">Reference proteome</keyword>
<keyword id="KW-0677">Repeat</keyword>
<keyword id="KW-0964">Secreted</keyword>
<keyword id="KW-0732">Signal</keyword>
<keyword id="KW-0813">Transport</keyword>
<keyword id="KW-0848">Vitamin D</keyword>
<sequence>MKRVLVLLLAVAFGHALERGRDYEKNKVCKEFSHLGKEDFTSLSLVLYSRKFPSGTFEQVSQLVKEVVSLTEACCAEGADPDCYDTRTSALSAKSCESNSPFPVHPGTAECCTKEGLERKLCMAALKHQPQEFPTYVEPTNDEICEAFRKDPKEYANQFMWEYSTNYGQAPLSLLVSYTKSYLSMVGSCCTSASPTVCFLKERLQLKHLSLLTTLSNRVCSQYAAYGEKKSRLSNLIKLAQKVPTADLEDVLPLAEDITNILSKCCESASEDCMAKELPEHTVKLCDNLSTKNSKFEDCCQEKTAMDVFVCTYFMPAAQLPELPDVELPTNKDVCDPGNTKVMDKYTFELSRRTHLPEVFLSKVLEPTLKSLGECCDVEDSTTCFNAKGPLLKKELSSFIDKGQELCADYSENTFTEYKKKLAERLKAKLPDATPTELAKLVNKHSDFASNCCSINSPPLYCDSEIDAELKNIL</sequence>
<accession>P02774</accession>
<accession>B4DPP2</accession>
<accession>D6RAK8</accession>
<accession>Q16309</accession>
<accession>Q16310</accession>
<accession>Q53F31</accession>
<accession>Q6GTG1</accession>
<name>VTDB_HUMAN</name>